<evidence type="ECO:0000250" key="1"/>
<evidence type="ECO:0000269" key="2">
    <source>
    </source>
</evidence>
<evidence type="ECO:0000269" key="3">
    <source>
    </source>
</evidence>
<dbReference type="EMBL" id="AF263377">
    <property type="protein sequence ID" value="AAG21976.1"/>
    <property type="molecule type" value="mRNA"/>
</dbReference>
<dbReference type="EMBL" id="AB013396">
    <property type="protein sequence ID" value="BAB08860.1"/>
    <property type="molecule type" value="Genomic_DNA"/>
</dbReference>
<dbReference type="EMBL" id="CP002688">
    <property type="protein sequence ID" value="AED96969.1"/>
    <property type="molecule type" value="Genomic_DNA"/>
</dbReference>
<dbReference type="EMBL" id="AK229464">
    <property type="protein sequence ID" value="BAF01322.1"/>
    <property type="molecule type" value="mRNA"/>
</dbReference>
<dbReference type="EMBL" id="BT026067">
    <property type="protein sequence ID" value="ABG48423.1"/>
    <property type="molecule type" value="mRNA"/>
</dbReference>
<dbReference type="RefSeq" id="NP_568870.1">
    <property type="nucleotide sequence ID" value="NM_125175.2"/>
</dbReference>
<dbReference type="SMR" id="Q9FDX1"/>
<dbReference type="BioGRID" id="21145">
    <property type="interactions" value="4"/>
</dbReference>
<dbReference type="FunCoup" id="Q9FDX1">
    <property type="interactions" value="816"/>
</dbReference>
<dbReference type="IntAct" id="Q9FDX1">
    <property type="interactions" value="3"/>
</dbReference>
<dbReference type="STRING" id="3702.Q9FDX1"/>
<dbReference type="PaxDb" id="3702-AT5G57900.1"/>
<dbReference type="ProteomicsDB" id="232558"/>
<dbReference type="EnsemblPlants" id="AT5G57900.1">
    <property type="protein sequence ID" value="AT5G57900.1"/>
    <property type="gene ID" value="AT5G57900"/>
</dbReference>
<dbReference type="GeneID" id="835901"/>
<dbReference type="Gramene" id="AT5G57900.1">
    <property type="protein sequence ID" value="AT5G57900.1"/>
    <property type="gene ID" value="AT5G57900"/>
</dbReference>
<dbReference type="KEGG" id="ath:AT5G57900"/>
<dbReference type="Araport" id="AT5G57900"/>
<dbReference type="TAIR" id="AT5G57900">
    <property type="gene designation" value="SKIP1"/>
</dbReference>
<dbReference type="eggNOG" id="KOG1947">
    <property type="taxonomic scope" value="Eukaryota"/>
</dbReference>
<dbReference type="HOGENOM" id="CLU_044915_3_1_1"/>
<dbReference type="InParanoid" id="Q9FDX1"/>
<dbReference type="OMA" id="SICEGCL"/>
<dbReference type="OrthoDB" id="550575at2759"/>
<dbReference type="PhylomeDB" id="Q9FDX1"/>
<dbReference type="UniPathway" id="UPA00143"/>
<dbReference type="PRO" id="PR:Q9FDX1"/>
<dbReference type="Proteomes" id="UP000006548">
    <property type="component" value="Chromosome 5"/>
</dbReference>
<dbReference type="ExpressionAtlas" id="Q9FDX1">
    <property type="expression patterns" value="baseline and differential"/>
</dbReference>
<dbReference type="GO" id="GO:0005634">
    <property type="term" value="C:nucleus"/>
    <property type="evidence" value="ECO:0007669"/>
    <property type="project" value="UniProtKB-SubCell"/>
</dbReference>
<dbReference type="GO" id="GO:0019005">
    <property type="term" value="C:SCF ubiquitin ligase complex"/>
    <property type="evidence" value="ECO:0000314"/>
    <property type="project" value="TAIR"/>
</dbReference>
<dbReference type="GO" id="GO:0016567">
    <property type="term" value="P:protein ubiquitination"/>
    <property type="evidence" value="ECO:0007669"/>
    <property type="project" value="UniProtKB-UniPathway"/>
</dbReference>
<dbReference type="FunFam" id="3.80.10.10:FF:000674">
    <property type="entry name" value="F-box protein SKIP1"/>
    <property type="match status" value="1"/>
</dbReference>
<dbReference type="Gene3D" id="1.20.1280.50">
    <property type="match status" value="1"/>
</dbReference>
<dbReference type="Gene3D" id="3.80.10.10">
    <property type="entry name" value="Ribonuclease Inhibitor"/>
    <property type="match status" value="1"/>
</dbReference>
<dbReference type="InterPro" id="IPR036047">
    <property type="entry name" value="F-box-like_dom_sf"/>
</dbReference>
<dbReference type="InterPro" id="IPR001611">
    <property type="entry name" value="Leu-rich_rpt"/>
</dbReference>
<dbReference type="InterPro" id="IPR006553">
    <property type="entry name" value="Leu-rich_rpt_Cys-con_subtyp"/>
</dbReference>
<dbReference type="InterPro" id="IPR032675">
    <property type="entry name" value="LRR_dom_sf"/>
</dbReference>
<dbReference type="PANTHER" id="PTHR38926:SF5">
    <property type="entry name" value="F-BOX AND LEUCINE-RICH REPEAT PROTEIN 6"/>
    <property type="match status" value="1"/>
</dbReference>
<dbReference type="PANTHER" id="PTHR38926">
    <property type="entry name" value="F-BOX DOMAIN CONTAINING PROTEIN, EXPRESSED"/>
    <property type="match status" value="1"/>
</dbReference>
<dbReference type="Pfam" id="PF13516">
    <property type="entry name" value="LRR_6"/>
    <property type="match status" value="1"/>
</dbReference>
<dbReference type="SMART" id="SM00367">
    <property type="entry name" value="LRR_CC"/>
    <property type="match status" value="3"/>
</dbReference>
<dbReference type="SUPFAM" id="SSF81383">
    <property type="entry name" value="F-box domain"/>
    <property type="match status" value="1"/>
</dbReference>
<dbReference type="SUPFAM" id="SSF52047">
    <property type="entry name" value="RNI-like"/>
    <property type="match status" value="1"/>
</dbReference>
<feature type="chain" id="PRO_0000272203" description="F-box protein SKIP1">
    <location>
        <begin position="1"/>
        <end position="300"/>
    </location>
</feature>
<feature type="domain" description="F-box; degenerate">
    <location>
        <begin position="11"/>
        <end position="52"/>
    </location>
</feature>
<accession>Q9FDX1</accession>
<sequence length="300" mass="34565">MEEDGSDWGGLAPEILINIISRLTIQELWTGPMFVQKSWLTVCRDPYLWSIFDLEPWFDSYPESTHLWSPEFEQKVDLMLRSVVDWSEGGLTKIRVRHCSDHALSYAADRCPNLQVLAIRSSPNVTDASMTKIAFRCRSLKELDISYCHEISHDTLVMIGRNCPNLRILKRNLMDWSSRHIGSVPTEYLDACPQDGDTEADAIGKHMINLEHLEIQFSRLSVKGLASICEGCPKLEYLDLFGCVHLSSRDITSNVSRLKWLKEVKKPDVYVPRSGDVAQTERYGHWRLYDERFDIQAMRI</sequence>
<protein>
    <recommendedName>
        <fullName>F-box protein SKIP1</fullName>
    </recommendedName>
    <alternativeName>
        <fullName>SKP1-interacting partner 1</fullName>
    </alternativeName>
</protein>
<organism>
    <name type="scientific">Arabidopsis thaliana</name>
    <name type="common">Mouse-ear cress</name>
    <dbReference type="NCBI Taxonomy" id="3702"/>
    <lineage>
        <taxon>Eukaryota</taxon>
        <taxon>Viridiplantae</taxon>
        <taxon>Streptophyta</taxon>
        <taxon>Embryophyta</taxon>
        <taxon>Tracheophyta</taxon>
        <taxon>Spermatophyta</taxon>
        <taxon>Magnoliopsida</taxon>
        <taxon>eudicotyledons</taxon>
        <taxon>Gunneridae</taxon>
        <taxon>Pentapetalae</taxon>
        <taxon>rosids</taxon>
        <taxon>malvids</taxon>
        <taxon>Brassicales</taxon>
        <taxon>Brassicaceae</taxon>
        <taxon>Camelineae</taxon>
        <taxon>Arabidopsis</taxon>
    </lineage>
</organism>
<proteinExistence type="evidence at protein level"/>
<comment type="function">
    <text evidence="1">Component of SCF(ASK-cullin-F-box) E3 ubiquitin ligase complexes, which may mediate the ubiquitination and subsequent proteasomal degradation of target proteins.</text>
</comment>
<comment type="pathway">
    <text>Protein modification; protein ubiquitination.</text>
</comment>
<comment type="subunit">
    <text evidence="1 2 3">Part of a SCF (ASK-cullin-F-box) protein ligase complex (By similarity). Interacts with SKP1A/ASK1 and SKP1B/ASK2.</text>
</comment>
<comment type="interaction">
    <interactant intactId="EBI-604228">
        <id>Q9FDX1</id>
    </interactant>
    <interactant intactId="EBI-532357">
        <id>Q39255</id>
        <label>SKP1A</label>
    </interactant>
    <organismsDiffer>false</organismsDiffer>
    <experiments>5</experiments>
</comment>
<comment type="subcellular location">
    <subcellularLocation>
        <location evidence="1">Nucleus</location>
    </subcellularLocation>
</comment>
<comment type="domain">
    <text evidence="1">The F-box is necessary for the interaction with ASK proteins.</text>
</comment>
<keyword id="KW-0539">Nucleus</keyword>
<keyword id="KW-1185">Reference proteome</keyword>
<keyword id="KW-0833">Ubl conjugation pathway</keyword>
<reference key="1">
    <citation type="journal article" date="2001" name="EMBO J.">
        <title>SKP1-SnRK protein kinase interactions mediate proteasomal binding of a plant SCF ubiquitin ligase.</title>
        <authorList>
            <person name="Farras R."/>
            <person name="Ferrando A."/>
            <person name="Jasik J."/>
            <person name="Kleinow T."/>
            <person name="Oekresz L."/>
            <person name="Tiburcio A."/>
            <person name="Salchert K."/>
            <person name="del Pozo C."/>
            <person name="Schell J."/>
            <person name="Koncz C."/>
        </authorList>
    </citation>
    <scope>NUCLEOTIDE SEQUENCE [MRNA]</scope>
    <scope>INTERACTION WITH SKP1A/ASK1</scope>
</reference>
<reference key="2">
    <citation type="journal article" date="1998" name="DNA Res.">
        <title>Structural analysis of Arabidopsis thaliana chromosome 5. VI. Sequence features of the regions of 1,367,185 bp covered by 19 physically assigned P1 and TAC clones.</title>
        <authorList>
            <person name="Kotani H."/>
            <person name="Nakamura Y."/>
            <person name="Sato S."/>
            <person name="Asamizu E."/>
            <person name="Kaneko T."/>
            <person name="Miyajima N."/>
            <person name="Tabata S."/>
        </authorList>
    </citation>
    <scope>NUCLEOTIDE SEQUENCE [LARGE SCALE GENOMIC DNA]</scope>
    <source>
        <strain>cv. Columbia</strain>
    </source>
</reference>
<reference key="3">
    <citation type="journal article" date="2017" name="Plant J.">
        <title>Araport11: a complete reannotation of the Arabidopsis thaliana reference genome.</title>
        <authorList>
            <person name="Cheng C.Y."/>
            <person name="Krishnakumar V."/>
            <person name="Chan A.P."/>
            <person name="Thibaud-Nissen F."/>
            <person name="Schobel S."/>
            <person name="Town C.D."/>
        </authorList>
    </citation>
    <scope>GENOME REANNOTATION</scope>
    <source>
        <strain>cv. Columbia</strain>
    </source>
</reference>
<reference key="4">
    <citation type="submission" date="2006-07" db="EMBL/GenBank/DDBJ databases">
        <title>Large-scale analysis of RIKEN Arabidopsis full-length (RAFL) cDNAs.</title>
        <authorList>
            <person name="Totoki Y."/>
            <person name="Seki M."/>
            <person name="Ishida J."/>
            <person name="Nakajima M."/>
            <person name="Enju A."/>
            <person name="Kamiya A."/>
            <person name="Narusaka M."/>
            <person name="Shin-i T."/>
            <person name="Nakagawa M."/>
            <person name="Sakamoto N."/>
            <person name="Oishi K."/>
            <person name="Kohara Y."/>
            <person name="Kobayashi M."/>
            <person name="Toyoda A."/>
            <person name="Sakaki Y."/>
            <person name="Sakurai T."/>
            <person name="Iida K."/>
            <person name="Akiyama K."/>
            <person name="Satou M."/>
            <person name="Toyoda T."/>
            <person name="Konagaya A."/>
            <person name="Carninci P."/>
            <person name="Kawai J."/>
            <person name="Hayashizaki Y."/>
            <person name="Shinozaki K."/>
        </authorList>
    </citation>
    <scope>NUCLEOTIDE SEQUENCE [LARGE SCALE MRNA]</scope>
    <source>
        <strain>cv. Columbia</strain>
    </source>
</reference>
<reference key="5">
    <citation type="submission" date="2006-07" db="EMBL/GenBank/DDBJ databases">
        <title>Arabidopsis ORF clones.</title>
        <authorList>
            <person name="Quinitio C."/>
            <person name="Chen H."/>
            <person name="Kim C.J."/>
            <person name="Shinn P."/>
            <person name="Ecker J.R."/>
        </authorList>
    </citation>
    <scope>NUCLEOTIDE SEQUENCE [LARGE SCALE MRNA]</scope>
    <source>
        <strain>cv. Columbia</strain>
    </source>
</reference>
<reference key="6">
    <citation type="journal article" date="2003" name="Plant J.">
        <title>Protein interaction analysis of SCF ubiquitin E3 ligase subunits from Arabidopsis.</title>
        <authorList>
            <person name="Risseeuw E.P."/>
            <person name="Daskalchuk T.E."/>
            <person name="Banks T.W."/>
            <person name="Liu E."/>
            <person name="Cotelesage J."/>
            <person name="Hellmann H."/>
            <person name="Estelle M."/>
            <person name="Somers D.E."/>
            <person name="Crosby W.L."/>
        </authorList>
    </citation>
    <scope>INTERACTION WITH SKP1A/ASK1 AND SPK1B/ASK2</scope>
</reference>
<gene>
    <name type="primary">SKIP1</name>
    <name type="ordered locus">At5g57900</name>
    <name type="ORF">MTI20.16</name>
</gene>
<name>SKIP1_ARATH</name>